<accession>B9KAU2</accession>
<evidence type="ECO:0000255" key="1">
    <source>
        <dbReference type="HAMAP-Rule" id="MF_00274"/>
    </source>
</evidence>
<protein>
    <recommendedName>
        <fullName evidence="1">Nucleoid-associated protein CTN_1899</fullName>
    </recommendedName>
</protein>
<gene>
    <name type="ordered locus">CTN_1899</name>
</gene>
<proteinExistence type="inferred from homology"/>
<feature type="chain" id="PRO_1000197685" description="Nucleoid-associated protein CTN_1899">
    <location>
        <begin position="1"/>
        <end position="118"/>
    </location>
</feature>
<keyword id="KW-0963">Cytoplasm</keyword>
<keyword id="KW-0238">DNA-binding</keyword>
<reference key="1">
    <citation type="submission" date="2007-11" db="EMBL/GenBank/DDBJ databases">
        <title>The genome sequence of the hyperthermophilic bacterium Thermotoga neapolitana.</title>
        <authorList>
            <person name="Lim S.K."/>
            <person name="Kim J.S."/>
            <person name="Cha S.H."/>
            <person name="Park B.C."/>
            <person name="Lee D.S."/>
            <person name="Tae H.S."/>
            <person name="Kim S.-J."/>
            <person name="Kim J.J."/>
            <person name="Park K.J."/>
            <person name="Lee S.Y."/>
        </authorList>
    </citation>
    <scope>NUCLEOTIDE SEQUENCE [LARGE SCALE GENOMIC DNA]</scope>
    <source>
        <strain>ATCC 49049 / DSM 4359 / NBRC 107923 / NS-E</strain>
    </source>
</reference>
<comment type="function">
    <text evidence="1">Binds to DNA and alters its conformation. May be involved in regulation of gene expression, nucleoid organization and DNA protection.</text>
</comment>
<comment type="subunit">
    <text evidence="1">Homodimer.</text>
</comment>
<comment type="subcellular location">
    <subcellularLocation>
        <location evidence="1">Cytoplasm</location>
        <location evidence="1">Nucleoid</location>
    </subcellularLocation>
</comment>
<comment type="similarity">
    <text evidence="1">Belongs to the YbaB/EbfC family.</text>
</comment>
<name>Y1899_THENN</name>
<sequence>MKKIKSFGGKSLGGGKQEKLLKDFMKMQEELQKKMQEMEESFSEMEVEASVGGGAVRIVATCDRRVKEIEIDEDLKEDLETLKDLLAAAVNEIMEKIEKRREEEMSKITQQFGIPGLM</sequence>
<organism>
    <name type="scientific">Thermotoga neapolitana (strain ATCC 49049 / DSM 4359 / NBRC 107923 / NS-E)</name>
    <dbReference type="NCBI Taxonomy" id="309803"/>
    <lineage>
        <taxon>Bacteria</taxon>
        <taxon>Thermotogati</taxon>
        <taxon>Thermotogota</taxon>
        <taxon>Thermotogae</taxon>
        <taxon>Thermotogales</taxon>
        <taxon>Thermotogaceae</taxon>
        <taxon>Thermotoga</taxon>
    </lineage>
</organism>
<dbReference type="EMBL" id="CP000916">
    <property type="protein sequence ID" value="ACM24075.1"/>
    <property type="molecule type" value="Genomic_DNA"/>
</dbReference>
<dbReference type="RefSeq" id="WP_015920311.1">
    <property type="nucleotide sequence ID" value="NC_011978.1"/>
</dbReference>
<dbReference type="SMR" id="B9KAU2"/>
<dbReference type="STRING" id="309803.CTN_1899"/>
<dbReference type="KEGG" id="tna:CTN_1899"/>
<dbReference type="eggNOG" id="COG0718">
    <property type="taxonomic scope" value="Bacteria"/>
</dbReference>
<dbReference type="HOGENOM" id="CLU_140930_1_0_0"/>
<dbReference type="Proteomes" id="UP000000445">
    <property type="component" value="Chromosome"/>
</dbReference>
<dbReference type="GO" id="GO:0043590">
    <property type="term" value="C:bacterial nucleoid"/>
    <property type="evidence" value="ECO:0007669"/>
    <property type="project" value="UniProtKB-UniRule"/>
</dbReference>
<dbReference type="GO" id="GO:0005829">
    <property type="term" value="C:cytosol"/>
    <property type="evidence" value="ECO:0007669"/>
    <property type="project" value="TreeGrafter"/>
</dbReference>
<dbReference type="GO" id="GO:0003677">
    <property type="term" value="F:DNA binding"/>
    <property type="evidence" value="ECO:0007669"/>
    <property type="project" value="UniProtKB-UniRule"/>
</dbReference>
<dbReference type="Gene3D" id="3.30.1310.10">
    <property type="entry name" value="Nucleoid-associated protein YbaB-like domain"/>
    <property type="match status" value="1"/>
</dbReference>
<dbReference type="HAMAP" id="MF_00274">
    <property type="entry name" value="DNA_YbaB_EbfC"/>
    <property type="match status" value="1"/>
</dbReference>
<dbReference type="InterPro" id="IPR036894">
    <property type="entry name" value="YbaB-like_sf"/>
</dbReference>
<dbReference type="InterPro" id="IPR004401">
    <property type="entry name" value="YbaB/EbfC"/>
</dbReference>
<dbReference type="NCBIfam" id="TIGR00103">
    <property type="entry name" value="DNA_YbaB_EbfC"/>
    <property type="match status" value="1"/>
</dbReference>
<dbReference type="PANTHER" id="PTHR33449">
    <property type="entry name" value="NUCLEOID-ASSOCIATED PROTEIN YBAB"/>
    <property type="match status" value="1"/>
</dbReference>
<dbReference type="PANTHER" id="PTHR33449:SF1">
    <property type="entry name" value="NUCLEOID-ASSOCIATED PROTEIN YBAB"/>
    <property type="match status" value="1"/>
</dbReference>
<dbReference type="Pfam" id="PF02575">
    <property type="entry name" value="YbaB_DNA_bd"/>
    <property type="match status" value="1"/>
</dbReference>
<dbReference type="PIRSF" id="PIRSF004555">
    <property type="entry name" value="UCP004555"/>
    <property type="match status" value="1"/>
</dbReference>
<dbReference type="SUPFAM" id="SSF82607">
    <property type="entry name" value="YbaB-like"/>
    <property type="match status" value="1"/>
</dbReference>